<comment type="function">
    <text>Sequence-specific transcription factor which is part of a developmental regulatory system that regulates segmental identity in the mesothorax. Provides cells with specific positional identities on the anterior-posterior axis.</text>
</comment>
<comment type="interaction">
    <interactant intactId="EBI-15726199">
        <id>P02833-1</id>
    </interactant>
    <interactant intactId="EBI-232318">
        <id>O18381</id>
        <label>ey</label>
    </interactant>
    <organismsDiffer>false</organismsDiffer>
    <experiments>4</experiments>
</comment>
<comment type="subcellular location">
    <subcellularLocation>
        <location evidence="4">Nucleus</location>
    </subcellularLocation>
</comment>
<comment type="alternative products">
    <event type="alternative splicing"/>
    <isoform>
        <id>P02833-1</id>
        <name>1</name>
        <name>A</name>
        <name>B</name>
        <name>I</name>
        <name>J</name>
        <sequence type="displayed"/>
    </isoform>
    <isoform>
        <id>P02833-2</id>
        <name>2</name>
        <name>H</name>
        <sequence type="described" ref="VSP_008097 VSP_008098"/>
    </isoform>
</comment>
<comment type="miscellaneous">
    <text>Loss of Antp results in altered development of the embryonic thoracic segments. Overexpression can cause antennae to be transformed into legs.</text>
</comment>
<comment type="similarity">
    <text evidence="4">Belongs to the Antp homeobox family.</text>
</comment>
<feature type="chain" id="PRO_0000200259" description="Homeotic protein antennapedia">
    <location>
        <begin position="1"/>
        <end position="378"/>
    </location>
</feature>
<feature type="DNA-binding region" description="Homeobox" evidence="1">
    <location>
        <begin position="297"/>
        <end position="356"/>
    </location>
</feature>
<feature type="region of interest" description="Disordered" evidence="2">
    <location>
        <begin position="48"/>
        <end position="132"/>
    </location>
</feature>
<feature type="region of interest" description="Disordered" evidence="2">
    <location>
        <begin position="230"/>
        <end position="287"/>
    </location>
</feature>
<feature type="region of interest" description="Disordered" evidence="2">
    <location>
        <begin position="352"/>
        <end position="378"/>
    </location>
</feature>
<feature type="short sequence motif" description="Antp-type hexapeptide">
    <location>
        <begin position="283"/>
        <end position="288"/>
    </location>
</feature>
<feature type="compositionally biased region" description="Low complexity" evidence="2">
    <location>
        <begin position="101"/>
        <end position="132"/>
    </location>
</feature>
<feature type="compositionally biased region" description="Low complexity" evidence="2">
    <location>
        <begin position="243"/>
        <end position="281"/>
    </location>
</feature>
<feature type="splice variant" id="VSP_008097" description="In isoform 2." evidence="3">
    <original>ER</original>
    <variation>GK</variation>
    <location>
        <begin position="296"/>
        <end position="297"/>
    </location>
</feature>
<feature type="splice variant" id="VSP_008098" description="In isoform 2." evidence="3">
    <location>
        <begin position="298"/>
        <end position="378"/>
    </location>
</feature>
<feature type="sequence conflict" description="In Ref. 10; AAA79241." evidence="4" ref="10">
    <original>G</original>
    <variation>E</variation>
    <location>
        <position position="300"/>
    </location>
</feature>
<feature type="strand" evidence="5">
    <location>
        <begin position="299"/>
        <end position="301"/>
    </location>
</feature>
<feature type="helix" evidence="6">
    <location>
        <begin position="306"/>
        <end position="318"/>
    </location>
</feature>
<feature type="helix" evidence="6">
    <location>
        <begin position="324"/>
        <end position="334"/>
    </location>
</feature>
<feature type="helix" evidence="6">
    <location>
        <begin position="338"/>
        <end position="353"/>
    </location>
</feature>
<evidence type="ECO:0000255" key="1">
    <source>
        <dbReference type="PROSITE-ProRule" id="PRU00108"/>
    </source>
</evidence>
<evidence type="ECO:0000256" key="2">
    <source>
        <dbReference type="SAM" id="MobiDB-lite"/>
    </source>
</evidence>
<evidence type="ECO:0000303" key="3">
    <source>
    </source>
</evidence>
<evidence type="ECO:0000305" key="4"/>
<evidence type="ECO:0007829" key="5">
    <source>
        <dbReference type="PDB" id="1HOM"/>
    </source>
</evidence>
<evidence type="ECO:0007829" key="6">
    <source>
        <dbReference type="PDB" id="5JLW"/>
    </source>
</evidence>
<sequence>MTMSTNNCESMTSYFTNSYMGADMHHGHYPGNGVTDLDAQQMHHYSQNANHQGNMPYPRFPPYDRMPYYNGQGMDQQQQHQVYSRPDSPSSQVGGVMPQAQTNGQLGVPQQQQQQQQQPSQNQQQQQAQQAPQQLQQQLPQVTQQVTHPQQQQQQPVVYASCKLQAAVGGLGMVPEGGSPPLVDQMSGHHMNAQMTLPHHMGHPQAQLGYTDVGVPDVTEVHQNHHNMGMYQQQSGVPPVGAPPQGMMHQGQGPPQMHQGHPGQHTPPSQNPNSQSSGMPSPLYPWMRSQFGKCQERKRGRQTYTRYQTLELEKEFHFNRYLTRRRRIEIAHALCLTERQIKIWFQNRRMKWKKENKTKGEPGSGGEGDEITPPNSPQ</sequence>
<proteinExistence type="evidence at protein level"/>
<dbReference type="EMBL" id="X03790">
    <property type="protein sequence ID" value="CAA27417.1"/>
    <property type="molecule type" value="Genomic_DNA"/>
</dbReference>
<dbReference type="EMBL" id="X03791">
    <property type="protein sequence ID" value="CAA27417.1"/>
    <property type="status" value="JOINED"/>
    <property type="molecule type" value="Genomic_DNA"/>
</dbReference>
<dbReference type="EMBL" id="M20704">
    <property type="protein sequence ID" value="AAA70214.1"/>
    <property type="molecule type" value="mRNA"/>
</dbReference>
<dbReference type="EMBL" id="M20705">
    <property type="protein sequence ID" value="AAA70216.1"/>
    <property type="molecule type" value="mRNA"/>
</dbReference>
<dbReference type="EMBL" id="AE001572">
    <property type="protein sequence ID" value="AAD19793.1"/>
    <property type="molecule type" value="Genomic_DNA"/>
</dbReference>
<dbReference type="EMBL" id="AE014297">
    <property type="protein sequence ID" value="AAG22205.3"/>
    <property type="molecule type" value="Genomic_DNA"/>
</dbReference>
<dbReference type="EMBL" id="AE014297">
    <property type="protein sequence ID" value="AAS65111.1"/>
    <property type="molecule type" value="Genomic_DNA"/>
</dbReference>
<dbReference type="EMBL" id="AY060407">
    <property type="protein sequence ID" value="AAL25446.1"/>
    <property type="molecule type" value="mRNA"/>
</dbReference>
<dbReference type="EMBL" id="M14496">
    <property type="protein sequence ID" value="AAA28376.1"/>
    <property type="molecule type" value="Genomic_DNA"/>
</dbReference>
<dbReference type="EMBL" id="K01948">
    <property type="protein sequence ID" value="AAA28373.1"/>
    <property type="status" value="ALT_SEQ"/>
    <property type="molecule type" value="Genomic_DNA"/>
</dbReference>
<dbReference type="EMBL" id="M12009">
    <property type="protein sequence ID" value="AAA79241.1"/>
    <property type="molecule type" value="mRNA"/>
</dbReference>
<dbReference type="PIR" id="A23450">
    <property type="entry name" value="A25399"/>
</dbReference>
<dbReference type="RefSeq" id="NP_996167.1">
    <molecule id="P02833-1"/>
    <property type="nucleotide sequence ID" value="NM_206445.1"/>
</dbReference>
<dbReference type="RefSeq" id="NP_996168.1">
    <molecule id="P02833-1"/>
    <property type="nucleotide sequence ID" value="NM_206446.1"/>
</dbReference>
<dbReference type="RefSeq" id="NP_996170.1">
    <molecule id="P02833-1"/>
    <property type="nucleotide sequence ID" value="NM_206448.1"/>
</dbReference>
<dbReference type="RefSeq" id="NP_996175.1">
    <molecule id="P02833-1"/>
    <property type="nucleotide sequence ID" value="NM_206453.1"/>
</dbReference>
<dbReference type="RefSeq" id="NP_996176.1">
    <molecule id="P02833-2"/>
    <property type="nucleotide sequence ID" value="NM_206454.1"/>
</dbReference>
<dbReference type="PDB" id="1AHD">
    <property type="method" value="NMR"/>
    <property type="chains" value="P=297-363"/>
</dbReference>
<dbReference type="PDB" id="1HOM">
    <property type="method" value="NMR"/>
    <property type="chains" value="A=297-363"/>
</dbReference>
<dbReference type="PDB" id="1KZ0">
    <property type="method" value="NMR"/>
    <property type="chains" value="A=339-354"/>
</dbReference>
<dbReference type="PDB" id="1KZ5">
    <property type="method" value="NMR"/>
    <property type="chains" value="A=339-354"/>
</dbReference>
<dbReference type="PDB" id="1OMQ">
    <property type="method" value="NMR"/>
    <property type="chains" value="A=339-354"/>
</dbReference>
<dbReference type="PDB" id="1SAN">
    <property type="method" value="NMR"/>
    <property type="chains" value="A=303-363"/>
</dbReference>
<dbReference type="PDB" id="2HOA">
    <property type="method" value="NMR"/>
    <property type="chains" value="A=297-363"/>
</dbReference>
<dbReference type="PDB" id="2ND6">
    <property type="method" value="NMR"/>
    <property type="chains" value="A=338-354"/>
</dbReference>
<dbReference type="PDB" id="2ND7">
    <property type="method" value="NMR"/>
    <property type="chains" value="A=338-354"/>
</dbReference>
<dbReference type="PDB" id="2ND8">
    <property type="method" value="NMR"/>
    <property type="chains" value="A=338-354"/>
</dbReference>
<dbReference type="PDB" id="4XIC">
    <property type="method" value="X-ray"/>
    <property type="resolution" value="2.69 A"/>
    <property type="chains" value="A/D=297-356"/>
</dbReference>
<dbReference type="PDB" id="4XID">
    <property type="method" value="X-ray"/>
    <property type="resolution" value="2.70 A"/>
    <property type="chains" value="A/D=297-356"/>
</dbReference>
<dbReference type="PDB" id="5JLW">
    <property type="method" value="X-ray"/>
    <property type="resolution" value="2.09 A"/>
    <property type="chains" value="A/D=297-356"/>
</dbReference>
<dbReference type="PDB" id="5JLX">
    <property type="method" value="X-ray"/>
    <property type="resolution" value="2.75 A"/>
    <property type="chains" value="A/D=297-356"/>
</dbReference>
<dbReference type="PDB" id="9ANT">
    <property type="method" value="X-ray"/>
    <property type="resolution" value="2.40 A"/>
    <property type="chains" value="A/B=296-356"/>
</dbReference>
<dbReference type="PDBsum" id="1AHD"/>
<dbReference type="PDBsum" id="1HOM"/>
<dbReference type="PDBsum" id="1KZ0"/>
<dbReference type="PDBsum" id="1KZ5"/>
<dbReference type="PDBsum" id="1OMQ"/>
<dbReference type="PDBsum" id="1SAN"/>
<dbReference type="PDBsum" id="2HOA"/>
<dbReference type="PDBsum" id="2ND6"/>
<dbReference type="PDBsum" id="2ND7"/>
<dbReference type="PDBsum" id="2ND8"/>
<dbReference type="PDBsum" id="4XIC"/>
<dbReference type="PDBsum" id="4XID"/>
<dbReference type="PDBsum" id="5JLW"/>
<dbReference type="PDBsum" id="5JLX"/>
<dbReference type="PDBsum" id="9ANT"/>
<dbReference type="BMRB" id="P02833"/>
<dbReference type="SMR" id="P02833"/>
<dbReference type="BioGRID" id="66033">
    <property type="interactions" value="182"/>
</dbReference>
<dbReference type="DIP" id="DIP-51405N"/>
<dbReference type="FunCoup" id="P02833">
    <property type="interactions" value="23"/>
</dbReference>
<dbReference type="IntAct" id="P02833">
    <property type="interactions" value="10"/>
</dbReference>
<dbReference type="STRING" id="7227.FBpp0081162"/>
<dbReference type="PaxDb" id="7227-FBpp0081161"/>
<dbReference type="DNASU" id="40835"/>
<dbReference type="EnsemblMetazoa" id="FBtr0081646">
    <molecule id="P02833-2"/>
    <property type="protein sequence ID" value="FBpp0081160"/>
    <property type="gene ID" value="FBgn0260642"/>
</dbReference>
<dbReference type="EnsemblMetazoa" id="FBtr0081647">
    <molecule id="P02833-1"/>
    <property type="protein sequence ID" value="FBpp0081161"/>
    <property type="gene ID" value="FBgn0260642"/>
</dbReference>
<dbReference type="EnsemblMetazoa" id="FBtr0081652">
    <molecule id="P02833-1"/>
    <property type="protein sequence ID" value="FBpp0081162"/>
    <property type="gene ID" value="FBgn0260642"/>
</dbReference>
<dbReference type="EnsemblMetazoa" id="FBtr0081654">
    <molecule id="P02833-1"/>
    <property type="protein sequence ID" value="FBpp0089245"/>
    <property type="gene ID" value="FBgn0260642"/>
</dbReference>
<dbReference type="EnsemblMetazoa" id="FBtr0081655">
    <molecule id="P02833-1"/>
    <property type="protein sequence ID" value="FBpp0089246"/>
    <property type="gene ID" value="FBgn0260642"/>
</dbReference>
<dbReference type="GeneID" id="40835"/>
<dbReference type="KEGG" id="dme:Dmel_CG1028"/>
<dbReference type="AGR" id="FB:FBgn0260642"/>
<dbReference type="CTD" id="40835"/>
<dbReference type="FlyBase" id="FBgn0260642">
    <property type="gene designation" value="Antp"/>
</dbReference>
<dbReference type="VEuPathDB" id="VectorBase:FBgn0260642"/>
<dbReference type="eggNOG" id="KOG0489">
    <property type="taxonomic scope" value="Eukaryota"/>
</dbReference>
<dbReference type="InParanoid" id="P02833"/>
<dbReference type="OMA" id="NRMDMRN"/>
<dbReference type="OrthoDB" id="6159439at2759"/>
<dbReference type="PhylomeDB" id="P02833"/>
<dbReference type="SignaLink" id="P02833"/>
<dbReference type="BioGRID-ORCS" id="40835">
    <property type="hits" value="0 hits in 3 CRISPR screens"/>
</dbReference>
<dbReference type="EvolutionaryTrace" id="P02833"/>
<dbReference type="GenomeRNAi" id="40835"/>
<dbReference type="PRO" id="PR:P02833"/>
<dbReference type="Proteomes" id="UP000000803">
    <property type="component" value="Chromosome 3R"/>
</dbReference>
<dbReference type="Bgee" id="FBgn0260642">
    <property type="expression patterns" value="Expressed in adult tracheocyte (Drosophila) in ovary and 120 other cell types or tissues"/>
</dbReference>
<dbReference type="ExpressionAtlas" id="P02833">
    <property type="expression patterns" value="baseline and differential"/>
</dbReference>
<dbReference type="GO" id="GO:0005737">
    <property type="term" value="C:cytoplasm"/>
    <property type="evidence" value="ECO:0000314"/>
    <property type="project" value="FlyBase"/>
</dbReference>
<dbReference type="GO" id="GO:0005634">
    <property type="term" value="C:nucleus"/>
    <property type="evidence" value="ECO:0000314"/>
    <property type="project" value="UniProtKB"/>
</dbReference>
<dbReference type="GO" id="GO:0003677">
    <property type="term" value="F:DNA binding"/>
    <property type="evidence" value="ECO:0000314"/>
    <property type="project" value="UniProtKB"/>
</dbReference>
<dbReference type="GO" id="GO:0000981">
    <property type="term" value="F:DNA-binding transcription factor activity, RNA polymerase II-specific"/>
    <property type="evidence" value="ECO:0000314"/>
    <property type="project" value="FlyBase"/>
</dbReference>
<dbReference type="GO" id="GO:0000978">
    <property type="term" value="F:RNA polymerase II cis-regulatory region sequence-specific DNA binding"/>
    <property type="evidence" value="ECO:0000318"/>
    <property type="project" value="GO_Central"/>
</dbReference>
<dbReference type="GO" id="GO:0043565">
    <property type="term" value="F:sequence-specific DNA binding"/>
    <property type="evidence" value="ECO:0000314"/>
    <property type="project" value="FlyBase"/>
</dbReference>
<dbReference type="GO" id="GO:0009948">
    <property type="term" value="P:anterior/posterior axis specification"/>
    <property type="evidence" value="ECO:0000315"/>
    <property type="project" value="UniProtKB"/>
</dbReference>
<dbReference type="GO" id="GO:0009952">
    <property type="term" value="P:anterior/posterior pattern specification"/>
    <property type="evidence" value="ECO:0000318"/>
    <property type="project" value="GO_Central"/>
</dbReference>
<dbReference type="GO" id="GO:0007507">
    <property type="term" value="P:heart development"/>
    <property type="evidence" value="ECO:0000270"/>
    <property type="project" value="FlyBase"/>
</dbReference>
<dbReference type="GO" id="GO:0048542">
    <property type="term" value="P:lymph gland development"/>
    <property type="evidence" value="ECO:0000315"/>
    <property type="project" value="FlyBase"/>
</dbReference>
<dbReference type="GO" id="GO:0007494">
    <property type="term" value="P:midgut development"/>
    <property type="evidence" value="ECO:0000304"/>
    <property type="project" value="FlyBase"/>
</dbReference>
<dbReference type="GO" id="GO:0042694">
    <property type="term" value="P:muscle cell fate specification"/>
    <property type="evidence" value="ECO:0000315"/>
    <property type="project" value="FlyBase"/>
</dbReference>
<dbReference type="GO" id="GO:0000122">
    <property type="term" value="P:negative regulation of transcription by RNA polymerase II"/>
    <property type="evidence" value="ECO:0000318"/>
    <property type="project" value="GO_Central"/>
</dbReference>
<dbReference type="GO" id="GO:0014019">
    <property type="term" value="P:neuroblast development"/>
    <property type="evidence" value="ECO:0000315"/>
    <property type="project" value="FlyBase"/>
</dbReference>
<dbReference type="GO" id="GO:0045944">
    <property type="term" value="P:positive regulation of transcription by RNA polymerase II"/>
    <property type="evidence" value="ECO:0000315"/>
    <property type="project" value="FlyBase"/>
</dbReference>
<dbReference type="GO" id="GO:0050767">
    <property type="term" value="P:regulation of neurogenesis"/>
    <property type="evidence" value="ECO:0000315"/>
    <property type="project" value="FlyBase"/>
</dbReference>
<dbReference type="GO" id="GO:0007383">
    <property type="term" value="P:specification of segmental identity, antennal segment"/>
    <property type="evidence" value="ECO:0000315"/>
    <property type="project" value="FlyBase"/>
</dbReference>
<dbReference type="GO" id="GO:0007384">
    <property type="term" value="P:specification of segmental identity, thorax"/>
    <property type="evidence" value="ECO:0000315"/>
    <property type="project" value="UniProtKB"/>
</dbReference>
<dbReference type="GO" id="GO:0007419">
    <property type="term" value="P:ventral cord development"/>
    <property type="evidence" value="ECO:0007001"/>
    <property type="project" value="FlyBase"/>
</dbReference>
<dbReference type="CDD" id="cd00086">
    <property type="entry name" value="homeodomain"/>
    <property type="match status" value="1"/>
</dbReference>
<dbReference type="FunFam" id="1.10.10.60:FF:000017">
    <property type="entry name" value="Homeobox protein antennapedia"/>
    <property type="match status" value="1"/>
</dbReference>
<dbReference type="Gene3D" id="1.10.10.60">
    <property type="entry name" value="Homeodomain-like"/>
    <property type="match status" value="1"/>
</dbReference>
<dbReference type="InterPro" id="IPR050296">
    <property type="entry name" value="Antp_homeobox"/>
</dbReference>
<dbReference type="InterPro" id="IPR001356">
    <property type="entry name" value="HD"/>
</dbReference>
<dbReference type="InterPro" id="IPR020479">
    <property type="entry name" value="HD_metazoa"/>
</dbReference>
<dbReference type="InterPro" id="IPR017995">
    <property type="entry name" value="Homeobox_antennapedia"/>
</dbReference>
<dbReference type="InterPro" id="IPR001827">
    <property type="entry name" value="Homeobox_Antennapedia_CS"/>
</dbReference>
<dbReference type="InterPro" id="IPR017970">
    <property type="entry name" value="Homeobox_CS"/>
</dbReference>
<dbReference type="InterPro" id="IPR009057">
    <property type="entry name" value="Homeodomain-like_sf"/>
</dbReference>
<dbReference type="PANTHER" id="PTHR45659">
    <property type="entry name" value="HOMEOBOX PROTEIN HOX"/>
    <property type="match status" value="1"/>
</dbReference>
<dbReference type="PANTHER" id="PTHR45659:SF22">
    <property type="entry name" value="HOMEOTIC PROTEIN ANTENNAPEDIA-RELATED"/>
    <property type="match status" value="1"/>
</dbReference>
<dbReference type="Pfam" id="PF00046">
    <property type="entry name" value="Homeodomain"/>
    <property type="match status" value="1"/>
</dbReference>
<dbReference type="PRINTS" id="PR00025">
    <property type="entry name" value="ANTENNAPEDIA"/>
</dbReference>
<dbReference type="PRINTS" id="PR00024">
    <property type="entry name" value="HOMEOBOX"/>
</dbReference>
<dbReference type="SMART" id="SM00389">
    <property type="entry name" value="HOX"/>
    <property type="match status" value="1"/>
</dbReference>
<dbReference type="SUPFAM" id="SSF46689">
    <property type="entry name" value="Homeodomain-like"/>
    <property type="match status" value="1"/>
</dbReference>
<dbReference type="PROSITE" id="PS00032">
    <property type="entry name" value="ANTENNAPEDIA"/>
    <property type="match status" value="1"/>
</dbReference>
<dbReference type="PROSITE" id="PS00027">
    <property type="entry name" value="HOMEOBOX_1"/>
    <property type="match status" value="1"/>
</dbReference>
<dbReference type="PROSITE" id="PS50071">
    <property type="entry name" value="HOMEOBOX_2"/>
    <property type="match status" value="1"/>
</dbReference>
<gene>
    <name type="primary">Antp</name>
    <name type="ORF">CG1028</name>
</gene>
<accession>P02833</accession>
<accession>Q95SZ6</accession>
<name>ANTP_DROME</name>
<reference key="1">
    <citation type="journal article" date="1986" name="EMBO J.">
        <title>Structural organization and sequence of the homeotic gene Antennapedia of Drosophila melanogaster.</title>
        <authorList>
            <person name="Schneuwly S."/>
            <person name="Kuroiwa A."/>
            <person name="Baumgartner P."/>
            <person name="Gehring W.J."/>
        </authorList>
    </citation>
    <scope>NUCLEOTIDE SEQUENCE [GENOMIC DNA] (ISOFORM 1)</scope>
</reference>
<reference key="2">
    <citation type="journal article" date="1986" name="Mol. Cell. Biol.">
        <title>Multiple transcripts from the Antennapedia gene of Drosophila melanogaster.</title>
        <authorList>
            <person name="Stroeher V.L."/>
            <person name="Jorgensen E.M."/>
            <person name="Garber R.L."/>
        </authorList>
    </citation>
    <scope>NUCLEOTIDE SEQUENCE [MRNA] (ISOFORM 1)</scope>
    <source>
        <strain>Oregon-R</strain>
        <tissue>Embryo</tissue>
        <tissue>Larva</tissue>
        <tissue>Pupae</tissue>
    </source>
</reference>
<reference key="3">
    <citation type="journal article" date="1986" name="Mol. Cell. Biol.">
        <title>Structure of transcripts from the homeotic Antennapedia gene of Drosophila melanogaster: two promoters control the major protein-coding region.</title>
        <authorList>
            <person name="Laughon A."/>
            <person name="Boulet A.M."/>
            <person name="Bermingham J.R. Jr."/>
            <person name="Laymon R.A."/>
            <person name="Scott M.P."/>
        </authorList>
    </citation>
    <scope>NUCLEOTIDE SEQUENCE [GENOMIC DNA] (ISOFORM 1)</scope>
</reference>
<reference key="4">
    <citation type="submission" date="1999-01" db="EMBL/GenBank/DDBJ databases">
        <title>Complete sequence of the Antennapedia complex of Drosophila.</title>
        <authorList>
            <person name="Celniker S.E."/>
            <person name="Pfeiffer B."/>
            <person name="Knafels J."/>
            <person name="Martin C.H."/>
            <person name="Mayeda C.A."/>
            <person name="Palazzolo M.J."/>
        </authorList>
    </citation>
    <scope>NUCLEOTIDE SEQUENCE [GENOMIC DNA] (ISOFORM 1)</scope>
</reference>
<reference key="5">
    <citation type="journal article" date="2000" name="Science">
        <title>The genome sequence of Drosophila melanogaster.</title>
        <authorList>
            <person name="Adams M.D."/>
            <person name="Celniker S.E."/>
            <person name="Holt R.A."/>
            <person name="Evans C.A."/>
            <person name="Gocayne J.D."/>
            <person name="Amanatides P.G."/>
            <person name="Scherer S.E."/>
            <person name="Li P.W."/>
            <person name="Hoskins R.A."/>
            <person name="Galle R.F."/>
            <person name="George R.A."/>
            <person name="Lewis S.E."/>
            <person name="Richards S."/>
            <person name="Ashburner M."/>
            <person name="Henderson S.N."/>
            <person name="Sutton G.G."/>
            <person name="Wortman J.R."/>
            <person name="Yandell M.D."/>
            <person name="Zhang Q."/>
            <person name="Chen L.X."/>
            <person name="Brandon R.C."/>
            <person name="Rogers Y.-H.C."/>
            <person name="Blazej R.G."/>
            <person name="Champe M."/>
            <person name="Pfeiffer B.D."/>
            <person name="Wan K.H."/>
            <person name="Doyle C."/>
            <person name="Baxter E.G."/>
            <person name="Helt G."/>
            <person name="Nelson C.R."/>
            <person name="Miklos G.L.G."/>
            <person name="Abril J.F."/>
            <person name="Agbayani A."/>
            <person name="An H.-J."/>
            <person name="Andrews-Pfannkoch C."/>
            <person name="Baldwin D."/>
            <person name="Ballew R.M."/>
            <person name="Basu A."/>
            <person name="Baxendale J."/>
            <person name="Bayraktaroglu L."/>
            <person name="Beasley E.M."/>
            <person name="Beeson K.Y."/>
            <person name="Benos P.V."/>
            <person name="Berman B.P."/>
            <person name="Bhandari D."/>
            <person name="Bolshakov S."/>
            <person name="Borkova D."/>
            <person name="Botchan M.R."/>
            <person name="Bouck J."/>
            <person name="Brokstein P."/>
            <person name="Brottier P."/>
            <person name="Burtis K.C."/>
            <person name="Busam D.A."/>
            <person name="Butler H."/>
            <person name="Cadieu E."/>
            <person name="Center A."/>
            <person name="Chandra I."/>
            <person name="Cherry J.M."/>
            <person name="Cawley S."/>
            <person name="Dahlke C."/>
            <person name="Davenport L.B."/>
            <person name="Davies P."/>
            <person name="de Pablos B."/>
            <person name="Delcher A."/>
            <person name="Deng Z."/>
            <person name="Mays A.D."/>
            <person name="Dew I."/>
            <person name="Dietz S.M."/>
            <person name="Dodson K."/>
            <person name="Doup L.E."/>
            <person name="Downes M."/>
            <person name="Dugan-Rocha S."/>
            <person name="Dunkov B.C."/>
            <person name="Dunn P."/>
            <person name="Durbin K.J."/>
            <person name="Evangelista C.C."/>
            <person name="Ferraz C."/>
            <person name="Ferriera S."/>
            <person name="Fleischmann W."/>
            <person name="Fosler C."/>
            <person name="Gabrielian A.E."/>
            <person name="Garg N.S."/>
            <person name="Gelbart W.M."/>
            <person name="Glasser K."/>
            <person name="Glodek A."/>
            <person name="Gong F."/>
            <person name="Gorrell J.H."/>
            <person name="Gu Z."/>
            <person name="Guan P."/>
            <person name="Harris M."/>
            <person name="Harris N.L."/>
            <person name="Harvey D.A."/>
            <person name="Heiman T.J."/>
            <person name="Hernandez J.R."/>
            <person name="Houck J."/>
            <person name="Hostin D."/>
            <person name="Houston K.A."/>
            <person name="Howland T.J."/>
            <person name="Wei M.-H."/>
            <person name="Ibegwam C."/>
            <person name="Jalali M."/>
            <person name="Kalush F."/>
            <person name="Karpen G.H."/>
            <person name="Ke Z."/>
            <person name="Kennison J.A."/>
            <person name="Ketchum K.A."/>
            <person name="Kimmel B.E."/>
            <person name="Kodira C.D."/>
            <person name="Kraft C.L."/>
            <person name="Kravitz S."/>
            <person name="Kulp D."/>
            <person name="Lai Z."/>
            <person name="Lasko P."/>
            <person name="Lei Y."/>
            <person name="Levitsky A.A."/>
            <person name="Li J.H."/>
            <person name="Li Z."/>
            <person name="Liang Y."/>
            <person name="Lin X."/>
            <person name="Liu X."/>
            <person name="Mattei B."/>
            <person name="McIntosh T.C."/>
            <person name="McLeod M.P."/>
            <person name="McPherson D."/>
            <person name="Merkulov G."/>
            <person name="Milshina N.V."/>
            <person name="Mobarry C."/>
            <person name="Morris J."/>
            <person name="Moshrefi A."/>
            <person name="Mount S.M."/>
            <person name="Moy M."/>
            <person name="Murphy B."/>
            <person name="Murphy L."/>
            <person name="Muzny D.M."/>
            <person name="Nelson D.L."/>
            <person name="Nelson D.R."/>
            <person name="Nelson K.A."/>
            <person name="Nixon K."/>
            <person name="Nusskern D.R."/>
            <person name="Pacleb J.M."/>
            <person name="Palazzolo M."/>
            <person name="Pittman G.S."/>
            <person name="Pan S."/>
            <person name="Pollard J."/>
            <person name="Puri V."/>
            <person name="Reese M.G."/>
            <person name="Reinert K."/>
            <person name="Remington K."/>
            <person name="Saunders R.D.C."/>
            <person name="Scheeler F."/>
            <person name="Shen H."/>
            <person name="Shue B.C."/>
            <person name="Siden-Kiamos I."/>
            <person name="Simpson M."/>
            <person name="Skupski M.P."/>
            <person name="Smith T.J."/>
            <person name="Spier E."/>
            <person name="Spradling A.C."/>
            <person name="Stapleton M."/>
            <person name="Strong R."/>
            <person name="Sun E."/>
            <person name="Svirskas R."/>
            <person name="Tector C."/>
            <person name="Turner R."/>
            <person name="Venter E."/>
            <person name="Wang A.H."/>
            <person name="Wang X."/>
            <person name="Wang Z.-Y."/>
            <person name="Wassarman D.A."/>
            <person name="Weinstock G.M."/>
            <person name="Weissenbach J."/>
            <person name="Williams S.M."/>
            <person name="Woodage T."/>
            <person name="Worley K.C."/>
            <person name="Wu D."/>
            <person name="Yang S."/>
            <person name="Yao Q.A."/>
            <person name="Ye J."/>
            <person name="Yeh R.-F."/>
            <person name="Zaveri J.S."/>
            <person name="Zhan M."/>
            <person name="Zhang G."/>
            <person name="Zhao Q."/>
            <person name="Zheng L."/>
            <person name="Zheng X.H."/>
            <person name="Zhong F.N."/>
            <person name="Zhong W."/>
            <person name="Zhou X."/>
            <person name="Zhu S.C."/>
            <person name="Zhu X."/>
            <person name="Smith H.O."/>
            <person name="Gibbs R.A."/>
            <person name="Myers E.W."/>
            <person name="Rubin G.M."/>
            <person name="Venter J.C."/>
        </authorList>
    </citation>
    <scope>NUCLEOTIDE SEQUENCE [LARGE SCALE GENOMIC DNA]</scope>
    <source>
        <strain>Berkeley</strain>
    </source>
</reference>
<reference key="6">
    <citation type="journal article" date="2002" name="Genome Biol.">
        <title>Annotation of the Drosophila melanogaster euchromatic genome: a systematic review.</title>
        <authorList>
            <person name="Misra S."/>
            <person name="Crosby M.A."/>
            <person name="Mungall C.J."/>
            <person name="Matthews B.B."/>
            <person name="Campbell K.S."/>
            <person name="Hradecky P."/>
            <person name="Huang Y."/>
            <person name="Kaminker J.S."/>
            <person name="Millburn G.H."/>
            <person name="Prochnik S.E."/>
            <person name="Smith C.D."/>
            <person name="Tupy J.L."/>
            <person name="Whitfield E.J."/>
            <person name="Bayraktaroglu L."/>
            <person name="Berman B.P."/>
            <person name="Bettencourt B.R."/>
            <person name="Celniker S.E."/>
            <person name="de Grey A.D.N.J."/>
            <person name="Drysdale R.A."/>
            <person name="Harris N.L."/>
            <person name="Richter J."/>
            <person name="Russo S."/>
            <person name="Schroeder A.J."/>
            <person name="Shu S.Q."/>
            <person name="Stapleton M."/>
            <person name="Yamada C."/>
            <person name="Ashburner M."/>
            <person name="Gelbart W.M."/>
            <person name="Rubin G.M."/>
            <person name="Lewis S.E."/>
        </authorList>
    </citation>
    <scope>GENOME REANNOTATION</scope>
    <scope>ALTERNATIVE SPLICING</scope>
    <source>
        <strain>Berkeley</strain>
    </source>
</reference>
<reference key="7">
    <citation type="journal article" date="2002" name="Genome Biol.">
        <title>A Drosophila full-length cDNA resource.</title>
        <authorList>
            <person name="Stapleton M."/>
            <person name="Carlson J.W."/>
            <person name="Brokstein P."/>
            <person name="Yu C."/>
            <person name="Champe M."/>
            <person name="George R.A."/>
            <person name="Guarin H."/>
            <person name="Kronmiller B."/>
            <person name="Pacleb J.M."/>
            <person name="Park S."/>
            <person name="Wan K.H."/>
            <person name="Rubin G.M."/>
            <person name="Celniker S.E."/>
        </authorList>
    </citation>
    <scope>NUCLEOTIDE SEQUENCE [LARGE SCALE MRNA] (ISOFORM 2)</scope>
    <source>
        <strain>Berkeley</strain>
        <tissue>Embryo</tissue>
    </source>
</reference>
<reference key="8">
    <citation type="journal article" date="1984" name="Proc. Natl. Acad. Sci. U.S.A.">
        <title>Structural relationships among genes that control development: sequence homology between the Antennapedia, Ultrabithorax, and fushi tarazu loci of Drosophila.</title>
        <authorList>
            <person name="Scott M.P."/>
            <person name="Weiner A.J."/>
        </authorList>
    </citation>
    <scope>NUCLEOTIDE SEQUENCE [GENOMIC DNA] OF 296-364</scope>
</reference>
<reference key="9">
    <citation type="journal article" date="1984" name="Cell">
        <title>A homologous protein-coding sequence in Drosophila homeotic genes and its conservation in other metazoans.</title>
        <authorList>
            <person name="McGinnis W."/>
            <person name="Garber R.L."/>
            <person name="Wirz J."/>
            <person name="Kuroiwa A."/>
            <person name="Gehring W.J."/>
        </authorList>
    </citation>
    <scope>NUCLEOTIDE SEQUENCE [GENOMIC DNA] OF 296-378</scope>
</reference>
<reference key="10">
    <citation type="journal article" date="1985" name="Cell">
        <title>Homeo box genes of the Antennapedia and bithorax complexes of Drosophila.</title>
        <authorList>
            <person name="Regulski M."/>
            <person name="Harding K."/>
            <person name="Kostriken R."/>
            <person name="Karch F."/>
            <person name="Levine M."/>
            <person name="McGinnis W."/>
        </authorList>
    </citation>
    <scope>NUCLEOTIDE SEQUENCE [MRNA] OF 297-357</scope>
</reference>
<reference key="11">
    <citation type="journal article" date="1987" name="Nature">
        <title>Redesigning the body plan of Drosophila by ectopic expression of the homoeotic gene Antennapedia.</title>
        <authorList>
            <person name="Schneuwly S."/>
            <person name="Klemenz R."/>
            <person name="Gehring W.J."/>
        </authorList>
    </citation>
    <scope>MUTANT ANALYSIS</scope>
</reference>
<reference key="12">
    <citation type="journal article" date="1990" name="J. Mol. Biol.">
        <title>Determination of the three-dimensional structure of the Antennapedia homeodomain from Drosophila in solution by 1H nuclear magnetic resonance spectroscopy.</title>
        <authorList>
            <person name="Billeter M."/>
            <person name="Qian Y.-Q."/>
            <person name="Otting G."/>
            <person name="Mueller M."/>
            <person name="Gehring W.J."/>
            <person name="Wuethrich K."/>
        </authorList>
    </citation>
    <scope>STRUCTURE BY NMR OF HOMEOBOX</scope>
</reference>
<reference key="13">
    <citation type="journal article" date="1993" name="J. Mol. Biol.">
        <title>Nuclear magnetic resonance spectroscopy of a DNA complex with the uniformly 13C-labeled Antennapedia homeodomain and structure determination of the DNA-bound homeodomain.</title>
        <authorList>
            <person name="Qian Y.-Q."/>
            <person name="Otting G."/>
            <person name="Billeter M."/>
            <person name="Mueller M."/>
            <person name="Gehring W.J."/>
            <person name="Wuethrich K."/>
        </authorList>
    </citation>
    <scope>STRUCTURE BY NMR OF HOMEOBOX</scope>
</reference>
<reference key="14">
    <citation type="journal article" date="1993" name="J. Mol. Biol.">
        <title>Determination of the nuclear magnetic resonance solution structure of an Antennapedia homeodomain-DNA complex.</title>
        <authorList>
            <person name="Billeter M."/>
            <person name="Qian Y.-Q."/>
            <person name="Otting G."/>
            <person name="Mueller M."/>
            <person name="Gehring W.J."/>
            <person name="Wuethrich K."/>
        </authorList>
    </citation>
    <scope>STRUCTURE BY NMR OF HOMEOBOX</scope>
</reference>
<reference key="15">
    <citation type="journal article" date="1992" name="Proc. Natl. Acad. Sci. U.S.A.">
        <title>NMR structure determination reveals that the homeodomain is connected through a flexible linker to the main body in the Drosophila Antennapedia protein.</title>
        <authorList>
            <person name="Qian Y.-Q."/>
            <person name="Otting G."/>
            <person name="Furukubo-Tokunaga K."/>
            <person name="Affolter M."/>
            <person name="Gehring W.J."/>
            <person name="Wuethrich K."/>
        </authorList>
    </citation>
    <scope>STRUCTURE BY NMR OF 279-363</scope>
</reference>
<reference key="16">
    <citation type="journal article" date="1998" name="Nat. Struct. Biol.">
        <title>Comparison of X-ray and NMR structures for the Antennapedia homeodomain-DNA complex.</title>
        <authorList>
            <person name="Fraenkel E."/>
            <person name="Pabo C.O."/>
        </authorList>
    </citation>
    <scope>X-RAY CRYSTALLOGRAPHY (2.4 ANGSTROMS) OF 297-356</scope>
</reference>
<keyword id="KW-0002">3D-structure</keyword>
<keyword id="KW-0025">Alternative splicing</keyword>
<keyword id="KW-0217">Developmental protein</keyword>
<keyword id="KW-0238">DNA-binding</keyword>
<keyword id="KW-0371">Homeobox</keyword>
<keyword id="KW-0539">Nucleus</keyword>
<keyword id="KW-1185">Reference proteome</keyword>
<keyword id="KW-0677">Repeat</keyword>
<organism>
    <name type="scientific">Drosophila melanogaster</name>
    <name type="common">Fruit fly</name>
    <dbReference type="NCBI Taxonomy" id="7227"/>
    <lineage>
        <taxon>Eukaryota</taxon>
        <taxon>Metazoa</taxon>
        <taxon>Ecdysozoa</taxon>
        <taxon>Arthropoda</taxon>
        <taxon>Hexapoda</taxon>
        <taxon>Insecta</taxon>
        <taxon>Pterygota</taxon>
        <taxon>Neoptera</taxon>
        <taxon>Endopterygota</taxon>
        <taxon>Diptera</taxon>
        <taxon>Brachycera</taxon>
        <taxon>Muscomorpha</taxon>
        <taxon>Ephydroidea</taxon>
        <taxon>Drosophilidae</taxon>
        <taxon>Drosophila</taxon>
        <taxon>Sophophora</taxon>
    </lineage>
</organism>
<protein>
    <recommendedName>
        <fullName>Homeotic protein antennapedia</fullName>
    </recommendedName>
</protein>